<dbReference type="EMBL" id="DQ836359">
    <property type="protein sequence ID" value="ABH03378.1"/>
    <property type="molecule type" value="mRNA"/>
</dbReference>
<dbReference type="EMBL" id="AB245090">
    <property type="protein sequence ID" value="BAF41977.1"/>
    <property type="molecule type" value="Genomic_DNA"/>
</dbReference>
<dbReference type="EMBL" id="DP000010">
    <property type="protein sequence ID" value="ABA94631.1"/>
    <property type="status" value="ALT_SEQ"/>
    <property type="molecule type" value="Genomic_DNA"/>
</dbReference>
<dbReference type="EMBL" id="AP008217">
    <property type="status" value="NOT_ANNOTATED_CDS"/>
    <property type="molecule type" value="Genomic_DNA"/>
</dbReference>
<dbReference type="EMBL" id="AP014967">
    <property type="protein sequence ID" value="BAT14714.1"/>
    <property type="molecule type" value="Genomic_DNA"/>
</dbReference>
<dbReference type="RefSeq" id="XP_015616742.1">
    <property type="nucleotide sequence ID" value="XM_015761256.1"/>
</dbReference>
<dbReference type="FunCoup" id="A0MH06">
    <property type="interactions" value="114"/>
</dbReference>
<dbReference type="STRING" id="39947.A0MH06"/>
<dbReference type="PaxDb" id="39947-A0MH06"/>
<dbReference type="EnsemblPlants" id="Os11t0595400-01">
    <property type="protein sequence ID" value="Os11t0595400-01"/>
    <property type="gene ID" value="Os11g0595400"/>
</dbReference>
<dbReference type="Gramene" id="Os11t0595400-01">
    <property type="protein sequence ID" value="Os11t0595400-01"/>
    <property type="gene ID" value="Os11g0595400"/>
</dbReference>
<dbReference type="HOGENOM" id="CLU_2201003_0_0_1"/>
<dbReference type="InParanoid" id="A0MH06"/>
<dbReference type="OMA" id="VAWWCLV"/>
<dbReference type="OrthoDB" id="696564at2759"/>
<dbReference type="Proteomes" id="UP000000763">
    <property type="component" value="Chromosome 11"/>
</dbReference>
<dbReference type="Proteomes" id="UP000059680">
    <property type="component" value="Chromosome 11"/>
</dbReference>
<dbReference type="GO" id="GO:0005576">
    <property type="term" value="C:extracellular region"/>
    <property type="evidence" value="ECO:0007669"/>
    <property type="project" value="UniProtKB-SubCell"/>
</dbReference>
<dbReference type="GO" id="GO:0033612">
    <property type="term" value="F:receptor serine/threonine kinase binding"/>
    <property type="evidence" value="ECO:0007669"/>
    <property type="project" value="InterPro"/>
</dbReference>
<dbReference type="GO" id="GO:0030154">
    <property type="term" value="P:cell differentiation"/>
    <property type="evidence" value="ECO:0007669"/>
    <property type="project" value="UniProtKB-KW"/>
</dbReference>
<dbReference type="InterPro" id="IPR044962">
    <property type="entry name" value="CLV3/ESR"/>
</dbReference>
<dbReference type="PANTHER" id="PTHR36349">
    <property type="entry name" value="PROTEIN CLAVATA 3"/>
    <property type="match status" value="1"/>
</dbReference>
<dbReference type="PANTHER" id="PTHR36349:SF2">
    <property type="entry name" value="PROTEIN CLAVATA 3"/>
    <property type="match status" value="1"/>
</dbReference>
<gene>
    <name type="primary">FON2</name>
    <name type="synonym">FON4</name>
    <name type="ordered locus">Os11g0595400</name>
    <name type="ordered locus">LOC_Os11g38270</name>
</gene>
<feature type="signal peptide" evidence="2">
    <location>
        <begin position="1"/>
        <end position="25"/>
    </location>
</feature>
<feature type="chain" id="PRO_0000422035" description="Protein FLORAL ORGAN NUMBER2">
    <location>
        <begin position="26"/>
        <end position="122"/>
    </location>
</feature>
<feature type="region of interest" description="Disordered" evidence="3">
    <location>
        <begin position="28"/>
        <end position="122"/>
    </location>
</feature>
<feature type="compositionally biased region" description="Basic residues" evidence="3">
    <location>
        <begin position="54"/>
        <end position="63"/>
    </location>
</feature>
<feature type="compositionally biased region" description="Low complexity" evidence="3">
    <location>
        <begin position="64"/>
        <end position="77"/>
    </location>
</feature>
<feature type="compositionally biased region" description="Basic and acidic residues" evidence="3">
    <location>
        <begin position="111"/>
        <end position="122"/>
    </location>
</feature>
<feature type="mutagenesis site" description="In fon2-3; total loss of function." evidence="5">
    <original>V</original>
    <variation>M</variation>
    <location>
        <position position="97"/>
    </location>
</feature>
<keyword id="KW-0217">Developmental protein</keyword>
<keyword id="KW-0221">Differentiation</keyword>
<keyword id="KW-1185">Reference proteome</keyword>
<keyword id="KW-0964">Secreted</keyword>
<keyword id="KW-0732">Signal</keyword>
<protein>
    <recommendedName>
        <fullName>Protein FLORAL ORGAN NUMBER2</fullName>
        <shortName>OsFON2</shortName>
    </recommendedName>
    <alternativeName>
        <fullName>CLAVATA3-like protein</fullName>
    </alternativeName>
    <alternativeName>
        <fullName>Protein FLORAL ORGAN NUMBER4</fullName>
    </alternativeName>
</protein>
<reference key="1">
    <citation type="journal article" date="2006" name="Plant Cell Physiol.">
        <title>Conservation and diversification of meristem maintenance mechanism in Oryza sativa: Function of the FLORAL ORGAN NUMBER2 gene.</title>
        <authorList>
            <person name="Suzaki T."/>
            <person name="Toriba T."/>
            <person name="Fujimoto M."/>
            <person name="Tsutsumi N."/>
            <person name="Kitano H."/>
            <person name="Hirano H."/>
        </authorList>
    </citation>
    <scope>NUCLEOTIDE SEQUENCE [GENOMIC DNA]</scope>
    <scope>FUNCTION</scope>
    <scope>MUTAGENESIS OF VAL-97</scope>
    <scope>DISRUPTION PHENOTYPE</scope>
    <scope>TISSUE SPECIFICITY</scope>
</reference>
<reference key="2">
    <citation type="journal article" date="2006" name="Plant Physiol.">
        <title>The floral organ number4 gene encoding a putative ortholog of Arabidopsis CLAVATA3 regulates apical meristem size in rice.</title>
        <authorList>
            <person name="Chu H."/>
            <person name="Qian Q."/>
            <person name="Liang W."/>
            <person name="Yin C."/>
            <person name="Tan H."/>
            <person name="Yao X."/>
            <person name="Yuan Z."/>
            <person name="Yang J."/>
            <person name="Huang H."/>
            <person name="Luo D."/>
            <person name="Ma H."/>
            <person name="Zhang D."/>
        </authorList>
    </citation>
    <scope>NUCLEOTIDE SEQUENCE [MRNA]</scope>
    <scope>FUNCTION</scope>
    <scope>TISSUE SPECIFICITY</scope>
    <scope>DEVELOPMENTAL STAGE</scope>
</reference>
<reference key="3">
    <citation type="journal article" date="2005" name="BMC Biol.">
        <title>The sequence of rice chromosomes 11 and 12, rich in disease resistance genes and recent gene duplications.</title>
        <authorList>
            <consortium name="The rice chromosomes 11 and 12 sequencing consortia"/>
        </authorList>
    </citation>
    <scope>NUCLEOTIDE SEQUENCE [LARGE SCALE GENOMIC DNA]</scope>
    <source>
        <strain>cv. Nipponbare</strain>
    </source>
</reference>
<reference key="4">
    <citation type="journal article" date="2005" name="Nature">
        <title>The map-based sequence of the rice genome.</title>
        <authorList>
            <consortium name="International rice genome sequencing project (IRGSP)"/>
        </authorList>
    </citation>
    <scope>NUCLEOTIDE SEQUENCE [LARGE SCALE GENOMIC DNA]</scope>
    <source>
        <strain>cv. Nipponbare</strain>
    </source>
</reference>
<reference key="5">
    <citation type="journal article" date="2008" name="Nucleic Acids Res.">
        <title>The rice annotation project database (RAP-DB): 2008 update.</title>
        <authorList>
            <consortium name="The rice annotation project (RAP)"/>
        </authorList>
    </citation>
    <scope>GENOME REANNOTATION</scope>
    <source>
        <strain>cv. Nipponbare</strain>
    </source>
</reference>
<reference key="6">
    <citation type="journal article" date="2013" name="Rice">
        <title>Improvement of the Oryza sativa Nipponbare reference genome using next generation sequence and optical map data.</title>
        <authorList>
            <person name="Kawahara Y."/>
            <person name="de la Bastide M."/>
            <person name="Hamilton J.P."/>
            <person name="Kanamori H."/>
            <person name="McCombie W.R."/>
            <person name="Ouyang S."/>
            <person name="Schwartz D.C."/>
            <person name="Tanaka T."/>
            <person name="Wu J."/>
            <person name="Zhou S."/>
            <person name="Childs K.L."/>
            <person name="Davidson R.M."/>
            <person name="Lin H."/>
            <person name="Quesada-Ocampo L."/>
            <person name="Vaillancourt B."/>
            <person name="Sakai H."/>
            <person name="Lee S.S."/>
            <person name="Kim J."/>
            <person name="Numa H."/>
            <person name="Itoh T."/>
            <person name="Buell C.R."/>
            <person name="Matsumoto T."/>
        </authorList>
    </citation>
    <scope>GENOME REANNOTATION</scope>
    <source>
        <strain>cv. Nipponbare</strain>
    </source>
</reference>
<reference key="7">
    <citation type="journal article" date="2007" name="Plant Signal. Behav.">
        <title>The shoot apical meristem size regulated by FON4 in rice.</title>
        <authorList>
            <person name="Chu H."/>
            <person name="Zhang D."/>
        </authorList>
    </citation>
    <scope>FUNCTION</scope>
</reference>
<organism>
    <name type="scientific">Oryza sativa subsp. japonica</name>
    <name type="common">Rice</name>
    <dbReference type="NCBI Taxonomy" id="39947"/>
    <lineage>
        <taxon>Eukaryota</taxon>
        <taxon>Viridiplantae</taxon>
        <taxon>Streptophyta</taxon>
        <taxon>Embryophyta</taxon>
        <taxon>Tracheophyta</taxon>
        <taxon>Spermatophyta</taxon>
        <taxon>Magnoliopsida</taxon>
        <taxon>Liliopsida</taxon>
        <taxon>Poales</taxon>
        <taxon>Poaceae</taxon>
        <taxon>BOP clade</taxon>
        <taxon>Oryzoideae</taxon>
        <taxon>Oryzeae</taxon>
        <taxon>Oryzinae</taxon>
        <taxon>Oryza</taxon>
        <taxon>Oryza sativa</taxon>
    </lineage>
</organism>
<accession>A0MH06</accession>
<accession>A0A0N7KT60</accession>
<accession>Q2R1S0</accession>
<comment type="function">
    <text evidence="4 5 6">Probable extracellular signal that regulates meristem maintenance. May function as a putative ligand for a receptor complex including FON1. Regulates the size of the floral meristem and the number of floral organs.</text>
</comment>
<comment type="subcellular location">
    <subcellularLocation>
        <location evidence="1">Secreted</location>
    </subcellularLocation>
</comment>
<comment type="tissue specificity">
    <text evidence="4 5">Expressed in shoot apical and axillary meristems, but not in other vegetative tissues. Detected in a group of small cells at the apical region of the central zone of the meristems.</text>
</comment>
<comment type="developmental stage">
    <text evidence="4">Expressed during the development of the floral organ primordia. No longer detected after the carpel has formed.</text>
</comment>
<comment type="disruption phenotype">
    <text evidence="5">Enlargement of the floral meristem and increased number of floral organs.</text>
</comment>
<comment type="similarity">
    <text evidence="7">Belongs to the CLV3/ESR signal peptide family.</text>
</comment>
<comment type="sequence caution" evidence="7">
    <conflict type="erroneous gene model prediction">
        <sequence resource="EMBL-CDS" id="ABA94631"/>
    </conflict>
</comment>
<evidence type="ECO:0000250" key="1"/>
<evidence type="ECO:0000255" key="2"/>
<evidence type="ECO:0000256" key="3">
    <source>
        <dbReference type="SAM" id="MobiDB-lite"/>
    </source>
</evidence>
<evidence type="ECO:0000269" key="4">
    <source>
    </source>
</evidence>
<evidence type="ECO:0000269" key="5">
    <source>
    </source>
</evidence>
<evidence type="ECO:0000269" key="6">
    <source>
    </source>
</evidence>
<evidence type="ECO:0000305" key="7"/>
<proteinExistence type="evidence at protein level"/>
<name>FON2_ORYSJ</name>
<sequence>MGRLFLCLVVAWCWVALLLVAPVHGRVGLPGEFSGDQRPVPATSFDLVTEPKTKQPRGVKGTRRPSWSSWSSTASRSSPPPGRGAPSAAAAAELRSVPAGPDPMHHHGSPRRPEHARSTGRP</sequence>